<protein>
    <recommendedName>
        <fullName>Importin-7</fullName>
        <shortName>Imp7</shortName>
    </recommendedName>
    <alternativeName>
        <fullName>Ran-binding protein 7</fullName>
        <shortName>RanBP7</shortName>
    </alternativeName>
</protein>
<reference key="1">
    <citation type="journal article" date="1998" name="EMBO J.">
        <title>Importin beta, transportin, RanBP5 and RanBP7 mediate nuclear import of ribosomal proteins in mammalian cells.</title>
        <authorList>
            <person name="Jaekel S."/>
            <person name="Goerlich D."/>
        </authorList>
    </citation>
    <scope>NUCLEOTIDE SEQUENCE [MRNA]</scope>
    <scope>FUNCTION</scope>
    <scope>INTERACTION WITH RPL23A; RPS7; RPL5 AND KPNB1</scope>
</reference>
<reference key="2">
    <citation type="journal article" date="2004" name="Nat. Genet.">
        <title>Complete sequencing and characterization of 21,243 full-length human cDNAs.</title>
        <authorList>
            <person name="Ota T."/>
            <person name="Suzuki Y."/>
            <person name="Nishikawa T."/>
            <person name="Otsuki T."/>
            <person name="Sugiyama T."/>
            <person name="Irie R."/>
            <person name="Wakamatsu A."/>
            <person name="Hayashi K."/>
            <person name="Sato H."/>
            <person name="Nagai K."/>
            <person name="Kimura K."/>
            <person name="Makita H."/>
            <person name="Sekine M."/>
            <person name="Obayashi M."/>
            <person name="Nishi T."/>
            <person name="Shibahara T."/>
            <person name="Tanaka T."/>
            <person name="Ishii S."/>
            <person name="Yamamoto J."/>
            <person name="Saito K."/>
            <person name="Kawai Y."/>
            <person name="Isono Y."/>
            <person name="Nakamura Y."/>
            <person name="Nagahari K."/>
            <person name="Murakami K."/>
            <person name="Yasuda T."/>
            <person name="Iwayanagi T."/>
            <person name="Wagatsuma M."/>
            <person name="Shiratori A."/>
            <person name="Sudo H."/>
            <person name="Hosoiri T."/>
            <person name="Kaku Y."/>
            <person name="Kodaira H."/>
            <person name="Kondo H."/>
            <person name="Sugawara M."/>
            <person name="Takahashi M."/>
            <person name="Kanda K."/>
            <person name="Yokoi T."/>
            <person name="Furuya T."/>
            <person name="Kikkawa E."/>
            <person name="Omura Y."/>
            <person name="Abe K."/>
            <person name="Kamihara K."/>
            <person name="Katsuta N."/>
            <person name="Sato K."/>
            <person name="Tanikawa M."/>
            <person name="Yamazaki M."/>
            <person name="Ninomiya K."/>
            <person name="Ishibashi T."/>
            <person name="Yamashita H."/>
            <person name="Murakawa K."/>
            <person name="Fujimori K."/>
            <person name="Tanai H."/>
            <person name="Kimata M."/>
            <person name="Watanabe M."/>
            <person name="Hiraoka S."/>
            <person name="Chiba Y."/>
            <person name="Ishida S."/>
            <person name="Ono Y."/>
            <person name="Takiguchi S."/>
            <person name="Watanabe S."/>
            <person name="Yosida M."/>
            <person name="Hotuta T."/>
            <person name="Kusano J."/>
            <person name="Kanehori K."/>
            <person name="Takahashi-Fujii A."/>
            <person name="Hara H."/>
            <person name="Tanase T.-O."/>
            <person name="Nomura Y."/>
            <person name="Togiya S."/>
            <person name="Komai F."/>
            <person name="Hara R."/>
            <person name="Takeuchi K."/>
            <person name="Arita M."/>
            <person name="Imose N."/>
            <person name="Musashino K."/>
            <person name="Yuuki H."/>
            <person name="Oshima A."/>
            <person name="Sasaki N."/>
            <person name="Aotsuka S."/>
            <person name="Yoshikawa Y."/>
            <person name="Matsunawa H."/>
            <person name="Ichihara T."/>
            <person name="Shiohata N."/>
            <person name="Sano S."/>
            <person name="Moriya S."/>
            <person name="Momiyama H."/>
            <person name="Satoh N."/>
            <person name="Takami S."/>
            <person name="Terashima Y."/>
            <person name="Suzuki O."/>
            <person name="Nakagawa S."/>
            <person name="Senoh A."/>
            <person name="Mizoguchi H."/>
            <person name="Goto Y."/>
            <person name="Shimizu F."/>
            <person name="Wakebe H."/>
            <person name="Hishigaki H."/>
            <person name="Watanabe T."/>
            <person name="Sugiyama A."/>
            <person name="Takemoto M."/>
            <person name="Kawakami B."/>
            <person name="Yamazaki M."/>
            <person name="Watanabe K."/>
            <person name="Kumagai A."/>
            <person name="Itakura S."/>
            <person name="Fukuzumi Y."/>
            <person name="Fujimori Y."/>
            <person name="Komiyama M."/>
            <person name="Tashiro H."/>
            <person name="Tanigami A."/>
            <person name="Fujiwara T."/>
            <person name="Ono T."/>
            <person name="Yamada K."/>
            <person name="Fujii Y."/>
            <person name="Ozaki K."/>
            <person name="Hirao M."/>
            <person name="Ohmori Y."/>
            <person name="Kawabata A."/>
            <person name="Hikiji T."/>
            <person name="Kobatake N."/>
            <person name="Inagaki H."/>
            <person name="Ikema Y."/>
            <person name="Okamoto S."/>
            <person name="Okitani R."/>
            <person name="Kawakami T."/>
            <person name="Noguchi S."/>
            <person name="Itoh T."/>
            <person name="Shigeta K."/>
            <person name="Senba T."/>
            <person name="Matsumura K."/>
            <person name="Nakajima Y."/>
            <person name="Mizuno T."/>
            <person name="Morinaga M."/>
            <person name="Sasaki M."/>
            <person name="Togashi T."/>
            <person name="Oyama M."/>
            <person name="Hata H."/>
            <person name="Watanabe M."/>
            <person name="Komatsu T."/>
            <person name="Mizushima-Sugano J."/>
            <person name="Satoh T."/>
            <person name="Shirai Y."/>
            <person name="Takahashi Y."/>
            <person name="Nakagawa K."/>
            <person name="Okumura K."/>
            <person name="Nagase T."/>
            <person name="Nomura N."/>
            <person name="Kikuchi H."/>
            <person name="Masuho Y."/>
            <person name="Yamashita R."/>
            <person name="Nakai K."/>
            <person name="Yada T."/>
            <person name="Nakamura Y."/>
            <person name="Ohara O."/>
            <person name="Isogai T."/>
            <person name="Sugano S."/>
        </authorList>
    </citation>
    <scope>NUCLEOTIDE SEQUENCE [LARGE SCALE MRNA]</scope>
    <source>
        <tissue>Uterus</tissue>
    </source>
</reference>
<reference key="3">
    <citation type="journal article" date="2006" name="Nature">
        <title>Human chromosome 11 DNA sequence and analysis including novel gene identification.</title>
        <authorList>
            <person name="Taylor T.D."/>
            <person name="Noguchi H."/>
            <person name="Totoki Y."/>
            <person name="Toyoda A."/>
            <person name="Kuroki Y."/>
            <person name="Dewar K."/>
            <person name="Lloyd C."/>
            <person name="Itoh T."/>
            <person name="Takeda T."/>
            <person name="Kim D.-W."/>
            <person name="She X."/>
            <person name="Barlow K.F."/>
            <person name="Bloom T."/>
            <person name="Bruford E."/>
            <person name="Chang J.L."/>
            <person name="Cuomo C.A."/>
            <person name="Eichler E."/>
            <person name="FitzGerald M.G."/>
            <person name="Jaffe D.B."/>
            <person name="LaButti K."/>
            <person name="Nicol R."/>
            <person name="Park H.-S."/>
            <person name="Seaman C."/>
            <person name="Sougnez C."/>
            <person name="Yang X."/>
            <person name="Zimmer A.R."/>
            <person name="Zody M.C."/>
            <person name="Birren B.W."/>
            <person name="Nusbaum C."/>
            <person name="Fujiyama A."/>
            <person name="Hattori M."/>
            <person name="Rogers J."/>
            <person name="Lander E.S."/>
            <person name="Sakaki Y."/>
        </authorList>
    </citation>
    <scope>NUCLEOTIDE SEQUENCE [LARGE SCALE GENOMIC DNA]</scope>
</reference>
<reference key="4">
    <citation type="submission" date="2005-09" db="EMBL/GenBank/DDBJ databases">
        <authorList>
            <person name="Mural R.J."/>
            <person name="Istrail S."/>
            <person name="Sutton G.G."/>
            <person name="Florea L."/>
            <person name="Halpern A.L."/>
            <person name="Mobarry C.M."/>
            <person name="Lippert R."/>
            <person name="Walenz B."/>
            <person name="Shatkay H."/>
            <person name="Dew I."/>
            <person name="Miller J.R."/>
            <person name="Flanigan M.J."/>
            <person name="Edwards N.J."/>
            <person name="Bolanos R."/>
            <person name="Fasulo D."/>
            <person name="Halldorsson B.V."/>
            <person name="Hannenhalli S."/>
            <person name="Turner R."/>
            <person name="Yooseph S."/>
            <person name="Lu F."/>
            <person name="Nusskern D.R."/>
            <person name="Shue B.C."/>
            <person name="Zheng X.H."/>
            <person name="Zhong F."/>
            <person name="Delcher A.L."/>
            <person name="Huson D.H."/>
            <person name="Kravitz S.A."/>
            <person name="Mouchard L."/>
            <person name="Reinert K."/>
            <person name="Remington K.A."/>
            <person name="Clark A.G."/>
            <person name="Waterman M.S."/>
            <person name="Eichler E.E."/>
            <person name="Adams M.D."/>
            <person name="Hunkapiller M.W."/>
            <person name="Myers E.W."/>
            <person name="Venter J.C."/>
        </authorList>
    </citation>
    <scope>NUCLEOTIDE SEQUENCE [LARGE SCALE GENOMIC DNA]</scope>
</reference>
<reference key="5">
    <citation type="journal article" date="2004" name="Genome Res.">
        <title>The status, quality, and expansion of the NIH full-length cDNA project: the Mammalian Gene Collection (MGC).</title>
        <authorList>
            <consortium name="The MGC Project Team"/>
        </authorList>
    </citation>
    <scope>NUCLEOTIDE SEQUENCE [LARGE SCALE MRNA]</scope>
</reference>
<reference key="6">
    <citation type="journal article" date="2003" name="Nat. Biotechnol.">
        <title>Exploring proteomes and analyzing protein processing by mass spectrometric identification of sorted N-terminal peptides.</title>
        <authorList>
            <person name="Gevaert K."/>
            <person name="Goethals M."/>
            <person name="Martens L."/>
            <person name="Van Damme J."/>
            <person name="Staes A."/>
            <person name="Thomas G.R."/>
            <person name="Vandekerckhove J."/>
        </authorList>
    </citation>
    <scope>PROTEIN SEQUENCE OF 1-11</scope>
    <scope>ACETYLATION AT MET-1</scope>
    <source>
        <tissue>Platelet</tissue>
    </source>
</reference>
<reference key="7">
    <citation type="submission" date="2000-09" db="EMBL/GenBank/DDBJ databases">
        <title>Comparative sequencing of a 1 Mb region in man (chromosome 11p15) and mouse (chromosome 7).</title>
        <authorList>
            <person name="Cichutek A."/>
            <person name="Winterpacht A."/>
            <person name="Hankeln T."/>
            <person name="Schmidt E.R."/>
            <person name="Zabel B.U."/>
        </authorList>
    </citation>
    <scope>NUCLEOTIDE SEQUENCE [GENOMIC DNA] OF 29-1038</scope>
    <source>
        <tissue>Blood</tissue>
    </source>
</reference>
<reference key="8">
    <citation type="journal article" date="2007" name="BMC Genomics">
        <title>The full-ORF clone resource of the German cDNA consortium.</title>
        <authorList>
            <person name="Bechtel S."/>
            <person name="Rosenfelder H."/>
            <person name="Duda A."/>
            <person name="Schmidt C.P."/>
            <person name="Ernst U."/>
            <person name="Wellenreuther R."/>
            <person name="Mehrle A."/>
            <person name="Schuster C."/>
            <person name="Bahr A."/>
            <person name="Bloecker H."/>
            <person name="Heubner D."/>
            <person name="Hoerlein A."/>
            <person name="Michel G."/>
            <person name="Wedler H."/>
            <person name="Koehrer K."/>
            <person name="Ottenwaelder B."/>
            <person name="Poustka A."/>
            <person name="Wiemann S."/>
            <person name="Schupp I."/>
        </authorList>
    </citation>
    <scope>NUCLEOTIDE SEQUENCE [LARGE SCALE MRNA] OF 831-1038</scope>
    <source>
        <tissue>Testis</tissue>
    </source>
</reference>
<reference key="9">
    <citation type="journal article" date="1997" name="J. Cell Biol.">
        <title>A novel class of RanGTP binding proteins.</title>
        <authorList>
            <person name="Goerlich D."/>
            <person name="Dabrowski M."/>
            <person name="Bischoff F.R."/>
            <person name="Kutay U."/>
            <person name="Bork P."/>
            <person name="Hartmann E."/>
            <person name="Prehn S."/>
            <person name="Izaurralde E."/>
        </authorList>
    </citation>
    <scope>CHARACTERIZATION</scope>
</reference>
<reference key="10">
    <citation type="journal article" date="1999" name="EMBO J.">
        <title>The importin beta/importin 7 heterodimer is a functional nuclear import receptor for histone H1.</title>
        <authorList>
            <person name="Jaekel S."/>
            <person name="Albig W."/>
            <person name="Kutay U."/>
            <person name="Bischoff F.R."/>
            <person name="Schwamborn K."/>
            <person name="Doenecke D."/>
            <person name="Goerlich D."/>
        </authorList>
    </citation>
    <scope>FUNCTION</scope>
    <scope>INTERACTION WITH H1 HISTONE AND KPNB1</scope>
    <scope>MUTAGENESIS OF LYS-61</scope>
</reference>
<reference key="11">
    <citation type="journal article" date="1999" name="J. Cell Biol.">
        <title>CRM1-mediated recycling of snurportin 1 to the cytoplasm.</title>
        <authorList>
            <person name="Paraskeva E."/>
            <person name="Izaurralde E."/>
            <person name="Bischoff F.R."/>
            <person name="Huber J."/>
            <person name="Kutay U."/>
            <person name="Hartmann E."/>
            <person name="Luehrmann R."/>
            <person name="Goerlich D."/>
        </authorList>
    </citation>
    <scope>IDENTIFICATION IN AN EXPORT RECEPTOR COMPLEX</scope>
    <scope>INTERACTION WITH KPNB1; SNUPN AND XPO1</scope>
</reference>
<reference key="12">
    <citation type="journal article" date="2001" name="J. Cell Sci.">
        <title>Signal recognition particle protein 19 is imported into the nucleus by importin 8 (RanBP8) and transportin.</title>
        <authorList>
            <person name="Dean K.A."/>
            <person name="von Ahsen O."/>
            <person name="Goerlich D."/>
            <person name="Fried H.M."/>
        </authorList>
    </citation>
    <scope>FUNCTION</scope>
    <scope>INTERACTION WITH RPL23A AND SRP19</scope>
</reference>
<reference key="13">
    <citation type="journal article" date="2003" name="EMBO J.">
        <title>Nuclear import of HIV-1 intracellular reverse transcription complexes is mediated by importin 7.</title>
        <authorList>
            <person name="Fassati A."/>
            <person name="Goerlich D."/>
            <person name="Harrison I."/>
            <person name="Zaytseva L."/>
            <person name="Mingot J.-M."/>
        </authorList>
    </citation>
    <scope>FUNCTION</scope>
    <scope>INTERACTION WITH INTEGRASE OF HIV-1 REVERSE TRANSCRIPTION COMPLEX (MICROBIAL INFECTION)</scope>
</reference>
<reference key="14">
    <citation type="journal article" date="2006" name="Cell">
        <title>Global, in vivo, and site-specific phosphorylation dynamics in signaling networks.</title>
        <authorList>
            <person name="Olsen J.V."/>
            <person name="Blagoev B."/>
            <person name="Gnad F."/>
            <person name="Macek B."/>
            <person name="Kumar C."/>
            <person name="Mortensen P."/>
            <person name="Mann M."/>
        </authorList>
    </citation>
    <scope>IDENTIFICATION BY MASS SPECTROMETRY [LARGE SCALE ANALYSIS]</scope>
    <source>
        <tissue>Cervix carcinoma</tissue>
    </source>
</reference>
<reference key="15">
    <citation type="journal article" date="2006" name="J. Biol. Chem.">
        <title>Multiple importins function as nuclear transport receptors for the Rev protein of human immunodeficiency virus type 1.</title>
        <authorList>
            <person name="Arnold M."/>
            <person name="Nath A."/>
            <person name="Hauber J."/>
            <person name="Kehlenbach R.H."/>
        </authorList>
    </citation>
    <scope>INTERACTION WITH HIV-1 REV (MICROBIAL INFECTION)</scope>
</reference>
<reference key="16">
    <citation type="journal article" date="2008" name="Proc. Natl. Acad. Sci. U.S.A.">
        <title>A quantitative atlas of mitotic phosphorylation.</title>
        <authorList>
            <person name="Dephoure N."/>
            <person name="Zhou C."/>
            <person name="Villen J."/>
            <person name="Beausoleil S.A."/>
            <person name="Bakalarski C.E."/>
            <person name="Elledge S.J."/>
            <person name="Gygi S.P."/>
        </authorList>
    </citation>
    <scope>PHOSPHORYLATION [LARGE SCALE ANALYSIS] AT SER-886; THR-898 AND SER-903</scope>
    <scope>IDENTIFICATION BY MASS SPECTROMETRY [LARGE SCALE ANALYSIS]</scope>
    <source>
        <tissue>Cervix carcinoma</tissue>
    </source>
</reference>
<reference key="17">
    <citation type="journal article" date="2009" name="Anal. Chem.">
        <title>Lys-N and trypsin cover complementary parts of the phosphoproteome in a refined SCX-based approach.</title>
        <authorList>
            <person name="Gauci S."/>
            <person name="Helbig A.O."/>
            <person name="Slijper M."/>
            <person name="Krijgsveld J."/>
            <person name="Heck A.J."/>
            <person name="Mohammed S."/>
        </authorList>
    </citation>
    <scope>ACETYLATION [LARGE SCALE ANALYSIS] AT MET-1</scope>
    <scope>IDENTIFICATION BY MASS SPECTROMETRY [LARGE SCALE ANALYSIS]</scope>
</reference>
<reference key="18">
    <citation type="journal article" date="2011" name="BMC Syst. Biol.">
        <title>Initial characterization of the human central proteome.</title>
        <authorList>
            <person name="Burkard T.R."/>
            <person name="Planyavsky M."/>
            <person name="Kaupe I."/>
            <person name="Breitwieser F.P."/>
            <person name="Buerckstuemmer T."/>
            <person name="Bennett K.L."/>
            <person name="Superti-Furga G."/>
            <person name="Colinge J."/>
        </authorList>
    </citation>
    <scope>IDENTIFICATION BY MASS SPECTROMETRY [LARGE SCALE ANALYSIS]</scope>
</reference>
<reference key="19">
    <citation type="journal article" date="2012" name="Mol. Cell. Proteomics">
        <title>Comparative large-scale characterisation of plant vs. mammal proteins reveals similar and idiosyncratic N-alpha acetylation features.</title>
        <authorList>
            <person name="Bienvenut W.V."/>
            <person name="Sumpton D."/>
            <person name="Martinez A."/>
            <person name="Lilla S."/>
            <person name="Espagne C."/>
            <person name="Meinnel T."/>
            <person name="Giglione C."/>
        </authorList>
    </citation>
    <scope>ACETYLATION [LARGE SCALE ANALYSIS] AT MET-1</scope>
    <scope>IDENTIFICATION BY MASS SPECTROMETRY [LARGE SCALE ANALYSIS]</scope>
</reference>
<reference key="20">
    <citation type="journal article" date="2012" name="Proc. Natl. Acad. Sci. U.S.A.">
        <title>N-terminal acetylome analyses and functional insights of the N-terminal acetyltransferase NatB.</title>
        <authorList>
            <person name="Van Damme P."/>
            <person name="Lasa M."/>
            <person name="Polevoda B."/>
            <person name="Gazquez C."/>
            <person name="Elosegui-Artola A."/>
            <person name="Kim D.S."/>
            <person name="De Juan-Pardo E."/>
            <person name="Demeyer K."/>
            <person name="Hole K."/>
            <person name="Larrea E."/>
            <person name="Timmerman E."/>
            <person name="Prieto J."/>
            <person name="Arnesen T."/>
            <person name="Sherman F."/>
            <person name="Gevaert K."/>
            <person name="Aldabe R."/>
        </authorList>
    </citation>
    <scope>ACETYLATION [LARGE SCALE ANALYSIS] AT MET-1</scope>
    <scope>IDENTIFICATION BY MASS SPECTROMETRY [LARGE SCALE ANALYSIS]</scope>
</reference>
<reference key="21">
    <citation type="journal article" date="2014" name="J. Proteomics">
        <title>An enzyme assisted RP-RPLC approach for in-depth analysis of human liver phosphoproteome.</title>
        <authorList>
            <person name="Bian Y."/>
            <person name="Song C."/>
            <person name="Cheng K."/>
            <person name="Dong M."/>
            <person name="Wang F."/>
            <person name="Huang J."/>
            <person name="Sun D."/>
            <person name="Wang L."/>
            <person name="Ye M."/>
            <person name="Zou H."/>
        </authorList>
    </citation>
    <scope>IDENTIFICATION BY MASS SPECTROMETRY [LARGE SCALE ANALYSIS]</scope>
    <source>
        <tissue>Liver</tissue>
    </source>
</reference>
<reference key="22">
    <citation type="journal article" date="2016" name="Nat. Genet.">
        <title>Mutations in nuclear pore genes NUP93, NUP205 and XPO5 cause steroid-resistant nephrotic syndrome.</title>
        <authorList>
            <person name="Braun D.A."/>
            <person name="Sadowski C.E."/>
            <person name="Kohl S."/>
            <person name="Lovric S."/>
            <person name="Astrinidis S.A."/>
            <person name="Pabst W.L."/>
            <person name="Gee H.Y."/>
            <person name="Ashraf S."/>
            <person name="Lawson J.A."/>
            <person name="Shril S."/>
            <person name="Airik M."/>
            <person name="Tan W."/>
            <person name="Schapiro D."/>
            <person name="Rao J."/>
            <person name="Choi W.I."/>
            <person name="Hermle T."/>
            <person name="Kemper M.J."/>
            <person name="Pohl M."/>
            <person name="Ozaltin F."/>
            <person name="Konrad M."/>
            <person name="Bogdanovic R."/>
            <person name="Buescher R."/>
            <person name="Helmchen U."/>
            <person name="Serdaroglu E."/>
            <person name="Lifton R.P."/>
            <person name="Antonin W."/>
            <person name="Hildebrandt F."/>
        </authorList>
    </citation>
    <scope>INTERACTION WITH SMAD4 AND NUP93</scope>
</reference>
<dbReference type="EMBL" id="AF098799">
    <property type="protein sequence ID" value="AAC68903.1"/>
    <property type="molecule type" value="mRNA"/>
</dbReference>
<dbReference type="EMBL" id="AK312885">
    <property type="protein sequence ID" value="BAG35733.1"/>
    <property type="molecule type" value="mRNA"/>
</dbReference>
<dbReference type="EMBL" id="AC055845">
    <property type="status" value="NOT_ANNOTATED_CDS"/>
    <property type="molecule type" value="Genomic_DNA"/>
</dbReference>
<dbReference type="EMBL" id="CH471064">
    <property type="protein sequence ID" value="EAW68593.1"/>
    <property type="molecule type" value="Genomic_DNA"/>
</dbReference>
<dbReference type="EMBL" id="BC114929">
    <property type="protein sequence ID" value="AAI14930.1"/>
    <property type="molecule type" value="mRNA"/>
</dbReference>
<dbReference type="EMBL" id="AJ295844">
    <property type="protein sequence ID" value="CAC17609.1"/>
    <property type="molecule type" value="Genomic_DNA"/>
</dbReference>
<dbReference type="EMBL" id="AL137335">
    <property type="protein sequence ID" value="CAB70698.1"/>
    <property type="molecule type" value="mRNA"/>
</dbReference>
<dbReference type="CCDS" id="CCDS31425.1"/>
<dbReference type="PIR" id="T46501">
    <property type="entry name" value="T46501"/>
</dbReference>
<dbReference type="RefSeq" id="NP_006382.1">
    <property type="nucleotide sequence ID" value="NM_006391.3"/>
</dbReference>
<dbReference type="SMR" id="O95373"/>
<dbReference type="BioGRID" id="115782">
    <property type="interactions" value="328"/>
</dbReference>
<dbReference type="CORUM" id="O95373"/>
<dbReference type="DIP" id="DIP-32574N"/>
<dbReference type="FunCoup" id="O95373">
    <property type="interactions" value="4633"/>
</dbReference>
<dbReference type="IntAct" id="O95373">
    <property type="interactions" value="187"/>
</dbReference>
<dbReference type="MINT" id="O95373"/>
<dbReference type="STRING" id="9606.ENSP00000369042"/>
<dbReference type="TCDB" id="1.I.1.1.3">
    <property type="family name" value="the nuclear pore complex (npc) family"/>
</dbReference>
<dbReference type="GlyCosmos" id="O95373">
    <property type="glycosylation" value="1 site, 2 glycans"/>
</dbReference>
<dbReference type="GlyGen" id="O95373">
    <property type="glycosylation" value="2 sites, 2 O-linked glycans (2 sites)"/>
</dbReference>
<dbReference type="iPTMnet" id="O95373"/>
<dbReference type="MetOSite" id="O95373"/>
<dbReference type="PhosphoSitePlus" id="O95373"/>
<dbReference type="SwissPalm" id="O95373"/>
<dbReference type="BioMuta" id="IPO7"/>
<dbReference type="jPOST" id="O95373"/>
<dbReference type="MassIVE" id="O95373"/>
<dbReference type="PaxDb" id="9606-ENSP00000369042"/>
<dbReference type="PeptideAtlas" id="O95373"/>
<dbReference type="ProteomicsDB" id="50828"/>
<dbReference type="Pumba" id="O95373"/>
<dbReference type="Antibodypedia" id="11566">
    <property type="antibodies" value="209 antibodies from 31 providers"/>
</dbReference>
<dbReference type="DNASU" id="10527"/>
<dbReference type="Ensembl" id="ENST00000379719.8">
    <property type="protein sequence ID" value="ENSP00000369042.3"/>
    <property type="gene ID" value="ENSG00000205339.10"/>
</dbReference>
<dbReference type="GeneID" id="10527"/>
<dbReference type="KEGG" id="hsa:10527"/>
<dbReference type="MANE-Select" id="ENST00000379719.8">
    <property type="protein sequence ID" value="ENSP00000369042.3"/>
    <property type="RefSeq nucleotide sequence ID" value="NM_006391.3"/>
    <property type="RefSeq protein sequence ID" value="NP_006382.1"/>
</dbReference>
<dbReference type="UCSC" id="uc001mho.4">
    <property type="organism name" value="human"/>
</dbReference>
<dbReference type="AGR" id="HGNC:9852"/>
<dbReference type="CTD" id="10527"/>
<dbReference type="DisGeNET" id="10527"/>
<dbReference type="GeneCards" id="IPO7"/>
<dbReference type="HGNC" id="HGNC:9852">
    <property type="gene designation" value="IPO7"/>
</dbReference>
<dbReference type="HPA" id="ENSG00000205339">
    <property type="expression patterns" value="Low tissue specificity"/>
</dbReference>
<dbReference type="MIM" id="605586">
    <property type="type" value="gene"/>
</dbReference>
<dbReference type="neXtProt" id="NX_O95373"/>
<dbReference type="OpenTargets" id="ENSG00000205339"/>
<dbReference type="PharmGKB" id="PA34213"/>
<dbReference type="VEuPathDB" id="HostDB:ENSG00000205339"/>
<dbReference type="eggNOG" id="KOG1991">
    <property type="taxonomic scope" value="Eukaryota"/>
</dbReference>
<dbReference type="GeneTree" id="ENSGT00940000154666"/>
<dbReference type="HOGENOM" id="CLU_004196_1_1_1"/>
<dbReference type="InParanoid" id="O95373"/>
<dbReference type="OMA" id="WVAKTSW"/>
<dbReference type="OrthoDB" id="760868at2759"/>
<dbReference type="PAN-GO" id="O95373">
    <property type="GO annotations" value="3 GO annotations based on evolutionary models"/>
</dbReference>
<dbReference type="PhylomeDB" id="O95373"/>
<dbReference type="TreeFam" id="TF300634"/>
<dbReference type="PathwayCommons" id="O95373"/>
<dbReference type="SignaLink" id="O95373"/>
<dbReference type="BioGRID-ORCS" id="10527">
    <property type="hits" value="616 hits in 1163 CRISPR screens"/>
</dbReference>
<dbReference type="CD-CODE" id="DEE660B4">
    <property type="entry name" value="Stress granule"/>
</dbReference>
<dbReference type="CD-CODE" id="FB4E32DD">
    <property type="entry name" value="Presynaptic clusters and postsynaptic densities"/>
</dbReference>
<dbReference type="ChiTaRS" id="IPO7">
    <property type="organism name" value="human"/>
</dbReference>
<dbReference type="GeneWiki" id="IPO7"/>
<dbReference type="GenomeRNAi" id="10527"/>
<dbReference type="Pharos" id="O95373">
    <property type="development level" value="Tbio"/>
</dbReference>
<dbReference type="PRO" id="PR:O95373"/>
<dbReference type="Proteomes" id="UP000005640">
    <property type="component" value="Chromosome 11"/>
</dbReference>
<dbReference type="RNAct" id="O95373">
    <property type="molecule type" value="protein"/>
</dbReference>
<dbReference type="Bgee" id="ENSG00000205339">
    <property type="expression patterns" value="Expressed in gluteal muscle and 219 other cell types or tissues"/>
</dbReference>
<dbReference type="ExpressionAtlas" id="O95373">
    <property type="expression patterns" value="baseline and differential"/>
</dbReference>
<dbReference type="GO" id="GO:0005829">
    <property type="term" value="C:cytosol"/>
    <property type="evidence" value="ECO:0000314"/>
    <property type="project" value="HPA"/>
</dbReference>
<dbReference type="GO" id="GO:0016020">
    <property type="term" value="C:membrane"/>
    <property type="evidence" value="ECO:0007005"/>
    <property type="project" value="UniProtKB"/>
</dbReference>
<dbReference type="GO" id="GO:0005635">
    <property type="term" value="C:nuclear envelope"/>
    <property type="evidence" value="ECO:0000318"/>
    <property type="project" value="GO_Central"/>
</dbReference>
<dbReference type="GO" id="GO:0005643">
    <property type="term" value="C:nuclear pore"/>
    <property type="evidence" value="ECO:0000304"/>
    <property type="project" value="ProtInc"/>
</dbReference>
<dbReference type="GO" id="GO:0005654">
    <property type="term" value="C:nucleoplasm"/>
    <property type="evidence" value="ECO:0000314"/>
    <property type="project" value="HPA"/>
</dbReference>
<dbReference type="GO" id="GO:0030695">
    <property type="term" value="F:GTPase regulator activity"/>
    <property type="evidence" value="ECO:0000304"/>
    <property type="project" value="ProtInc"/>
</dbReference>
<dbReference type="GO" id="GO:0042393">
    <property type="term" value="F:histone binding"/>
    <property type="evidence" value="ECO:0007669"/>
    <property type="project" value="Ensembl"/>
</dbReference>
<dbReference type="GO" id="GO:0046332">
    <property type="term" value="F:SMAD binding"/>
    <property type="evidence" value="ECO:0000353"/>
    <property type="project" value="UniProtKB"/>
</dbReference>
<dbReference type="GO" id="GO:0031267">
    <property type="term" value="F:small GTPase binding"/>
    <property type="evidence" value="ECO:0000304"/>
    <property type="project" value="ProtInc"/>
</dbReference>
<dbReference type="GO" id="GO:0045087">
    <property type="term" value="P:innate immune response"/>
    <property type="evidence" value="ECO:0007669"/>
    <property type="project" value="Ensembl"/>
</dbReference>
<dbReference type="GO" id="GO:0045786">
    <property type="term" value="P:negative regulation of cell cycle"/>
    <property type="evidence" value="ECO:0000304"/>
    <property type="project" value="ARUK-UCL"/>
</dbReference>
<dbReference type="GO" id="GO:0045668">
    <property type="term" value="P:negative regulation of osteoblast differentiation"/>
    <property type="evidence" value="ECO:0000250"/>
    <property type="project" value="UniProtKB"/>
</dbReference>
<dbReference type="GO" id="GO:1901331">
    <property type="term" value="P:positive regulation of odontoblast differentiation"/>
    <property type="evidence" value="ECO:0000250"/>
    <property type="project" value="UniProtKB"/>
</dbReference>
<dbReference type="GO" id="GO:1900182">
    <property type="term" value="P:positive regulation of protein localization to nucleus"/>
    <property type="evidence" value="ECO:0000250"/>
    <property type="project" value="UniProtKB"/>
</dbReference>
<dbReference type="GO" id="GO:0006606">
    <property type="term" value="P:protein import into nucleus"/>
    <property type="evidence" value="ECO:0000318"/>
    <property type="project" value="GO_Central"/>
</dbReference>
<dbReference type="FunFam" id="1.25.10.10:FF:000053">
    <property type="entry name" value="Importin 7"/>
    <property type="match status" value="1"/>
</dbReference>
<dbReference type="Gene3D" id="1.25.10.10">
    <property type="entry name" value="Leucine-rich Repeat Variant"/>
    <property type="match status" value="1"/>
</dbReference>
<dbReference type="InterPro" id="IPR011989">
    <property type="entry name" value="ARM-like"/>
</dbReference>
<dbReference type="InterPro" id="IPR016024">
    <property type="entry name" value="ARM-type_fold"/>
</dbReference>
<dbReference type="InterPro" id="IPR001494">
    <property type="entry name" value="Importin-beta_N"/>
</dbReference>
<dbReference type="InterPro" id="IPR013713">
    <property type="entry name" value="XPO2_central"/>
</dbReference>
<dbReference type="PANTHER" id="PTHR10997:SF27">
    <property type="entry name" value="IMPORTIN-7"/>
    <property type="match status" value="1"/>
</dbReference>
<dbReference type="PANTHER" id="PTHR10997">
    <property type="entry name" value="IMPORTIN-7, 8, 11"/>
    <property type="match status" value="1"/>
</dbReference>
<dbReference type="Pfam" id="PF08506">
    <property type="entry name" value="Cse1"/>
    <property type="match status" value="1"/>
</dbReference>
<dbReference type="Pfam" id="PF03810">
    <property type="entry name" value="IBN_N"/>
    <property type="match status" value="1"/>
</dbReference>
<dbReference type="SMART" id="SM00913">
    <property type="entry name" value="IBN_N"/>
    <property type="match status" value="1"/>
</dbReference>
<dbReference type="SUPFAM" id="SSF48371">
    <property type="entry name" value="ARM repeat"/>
    <property type="match status" value="1"/>
</dbReference>
<dbReference type="PROSITE" id="PS50166">
    <property type="entry name" value="IMPORTIN_B_NT"/>
    <property type="match status" value="1"/>
</dbReference>
<accession>O95373</accession>
<accession>A6NNM5</accession>
<accession>B2R786</accession>
<accession>Q1RMF7</accession>
<accession>Q9H177</accession>
<accession>Q9NTE3</accession>
<gene>
    <name type="primary">IPO7</name>
    <name type="synonym">RANBP7</name>
</gene>
<sequence length="1038" mass="119517">MDPNTIIEALRGTMDPALREAAERQLNEAHKSLNFVSTLLQITMSEQLDLPVRQAGVIYLKNMITQYWPDRETAPGDISPYTIPEEDRHCIRENIVEAIIHSPELIRVQLTTCIHHIIKHDYPSRWTAIVDKIGFYLQSDNSACWLGILLCLYQLVKNYEYKKPEERSPLVAAMQHFLPVLKDRFIQLLSDQSDQSVLIQKQIFKIFYALVQYTLPLELINQQNLTEWIEILKTVVNRDVPNETLQVEEDDRPELPWWKCKKWALHILARLFERYGSPGNVSKEYNEFAEVFLKAFAVGVQQVLLKVLYQYKEKQYMAPRVLQQTLNYINQGVSHALTWKNLKPHIQGIIQDVIFPLMCYTDADEELWQEDPYEYIRMKFDVFEDFISPTTAAQTLLFTACSKRKEVLQKTMGFCYQILTEPNADPRKKDGALHMIGSLAEILLKKKIYKDQMEYMLQNHVFPLFSSELGYMRARACWVLHYFCEVKFKSDQNLQTALELTRRCLIDDREMPVKVEAAIALQVLISNQEKAKEYITPFIRPVMQALLHIIRETENDDLTNVIQKMICEYSEEVTPIAVEMTQHLAMTFNQVIQTGPDEEGSDDKAVTAMGILNTIDTLLSVVEDHKEITQQLEGICLQVIGTVLQQHVLEFYEEIFSLAHSLTCQQVSPQMWQLLPLVFEVFQQDGFDYFTDMMPLLHNYVTVDTDTLLSDTKYLEMIYSMCKKVLTGVAGEDAECHAAKLLEVIILQCKGRGIDQCIPLFVEAALERLTREVKTSELRTMCLQVAIAALYYNPHLLLNTLENLRFPNNVEPVTNHFITQWLNDVDCFLGLHDRKMCVLGLCALIDMEQIPQVLNQVSGQILPAFILLFNGLKRAYACHAEHENDSDDDDEAEDDDETEELGSDEDDIDEDGQEYLEILAKQAGEDGDDEDWEEDDAEETALEGYSTIIDDEDNPVDEYQIFKAIFQTIQNRNPVWYQALTHGLNEEQRKQLQDIATLADQRRAAHESKMIEKHGGYKFSAPVVPSSFNFGGPAPGMN</sequence>
<name>IPO7_HUMAN</name>
<feature type="chain" id="PRO_0000120750" description="Importin-7">
    <location>
        <begin position="1"/>
        <end position="1038"/>
    </location>
</feature>
<feature type="domain" description="Importin N-terminal" evidence="2">
    <location>
        <begin position="22"/>
        <end position="101"/>
    </location>
</feature>
<feature type="region of interest" description="Disordered" evidence="3">
    <location>
        <begin position="881"/>
        <end position="910"/>
    </location>
</feature>
<feature type="compositionally biased region" description="Acidic residues" evidence="3">
    <location>
        <begin position="884"/>
        <end position="910"/>
    </location>
</feature>
<feature type="modified residue" description="N-acetylmethionine" evidence="7 14 15 16">
    <location>
        <position position="1"/>
    </location>
</feature>
<feature type="modified residue" description="Phosphoserine" evidence="13">
    <location>
        <position position="886"/>
    </location>
</feature>
<feature type="modified residue" description="Phosphothreonine" evidence="13">
    <location>
        <position position="898"/>
    </location>
</feature>
<feature type="modified residue" description="Phosphoserine" evidence="13">
    <location>
        <position position="903"/>
    </location>
</feature>
<feature type="modified residue" description="Phosphoserine" evidence="1">
    <location>
        <position position="1020"/>
    </location>
</feature>
<feature type="sequence variant" id="VAR_050003" description="In dbSNP:rs11042340.">
    <original>T</original>
    <variation>N</variation>
    <location>
        <position position="111"/>
    </location>
</feature>
<feature type="mutagenesis site" description="Lowered affinity for RanGTP-binding." evidence="5">
    <original>K</original>
    <variation>A</variation>
    <variation>D</variation>
    <location>
        <position position="61"/>
    </location>
</feature>
<organism>
    <name type="scientific">Homo sapiens</name>
    <name type="common">Human</name>
    <dbReference type="NCBI Taxonomy" id="9606"/>
    <lineage>
        <taxon>Eukaryota</taxon>
        <taxon>Metazoa</taxon>
        <taxon>Chordata</taxon>
        <taxon>Craniata</taxon>
        <taxon>Vertebrata</taxon>
        <taxon>Euteleostomi</taxon>
        <taxon>Mammalia</taxon>
        <taxon>Eutheria</taxon>
        <taxon>Euarchontoglires</taxon>
        <taxon>Primates</taxon>
        <taxon>Haplorrhini</taxon>
        <taxon>Catarrhini</taxon>
        <taxon>Hominidae</taxon>
        <taxon>Homo</taxon>
    </lineage>
</organism>
<keyword id="KW-0007">Acetylation</keyword>
<keyword id="KW-0963">Cytoplasm</keyword>
<keyword id="KW-0903">Direct protein sequencing</keyword>
<keyword id="KW-0945">Host-virus interaction</keyword>
<keyword id="KW-0539">Nucleus</keyword>
<keyword id="KW-0597">Phosphoprotein</keyword>
<keyword id="KW-0653">Protein transport</keyword>
<keyword id="KW-1267">Proteomics identification</keyword>
<keyword id="KW-1185">Reference proteome</keyword>
<keyword id="KW-0813">Transport</keyword>
<proteinExistence type="evidence at protein level"/>
<comment type="function">
    <text evidence="1 5 6 11">Functions in nuclear protein import, either by acting as autonomous nuclear transport receptor or as an adapter-like protein in association with the importin-beta subunit KPNB1. Acting autonomously, is thought to serve itself as receptor for nuclear localization signals (NLS) and to promote translocation of import substrates through the nuclear pore complex (NPC) by an energy requiring, Ran-dependent mechanism. At the nucleoplasmic side of the NPC, Ran binds to importin, the importin/substrate complex dissociates and importin is re-exported from the nucleus to the cytoplasm where GTP hydrolysis releases Ran. The directionality of nuclear import is thought to be conferred by an asymmetric distribution of the GTP- and GDP-bound forms of Ran between the cytoplasm and nucleus. Mediates autonomously the nuclear import of ribosomal proteins RPL23A, RPS7 and RPL5 (PubMed:11682607). In association with KPNB1 mediates the nuclear import of H1 histone and the Ran-binding site of IPO7 is not required but synergizes with that of KPNB1 in importin/substrate complex dissociation. Promotes odontoblast differentiation via promoting nuclear translocation of DLX3, KLF4, SMAD2, thereby facilitating the transcription of target genes that play a role in odontoblast differentiation (By similarity). Facilitates BMP4-induced translocation of SMAD1 to the nucleus and recruitment to the MSX1 gene promoter, thereby promotes the expression of the odontogenic regulator MSX1 in dental mesenchymal cells (By similarity). Also promotes odontoblast differentiation by facilitating the nuclear translocation of HDAC6 and subsequent repression of RUNX2 expression (By similarity). Inhibits osteoblast differentiation by inhibiting nuclear translocation of RUNX2 and therefore inhibition of RUNX2 target gene transcription (By similarity). In vitro, mediates nuclear import of H2A, H2B, H3 and H4 histones.</text>
</comment>
<comment type="function">
    <text evidence="8 9">(Microbial infection) Mediates the nuclear import of HIV-1 reverse transcription complex (RTC) integrase. Binds and mediates the nuclear import of HIV-1 Rev.</text>
</comment>
<comment type="subunit">
    <text evidence="1 4 5 6 10 11">Forms a heterodimer with KPNB1 (PubMed:10209022, PubMed:10228156, PubMed:9687515). Interacts with histone H1 (PubMed:10228156). Interacts with H2A, H2B, H3 and H4 histones (By similarity). Interacts with SNUPN and XPO1 (PubMed:10209022). Interacts with RPS7 and RPL5 (PubMed:9687515). Interacts with RPL23A (via BIB domain) (PubMed:11682607, PubMed:9687515). Binds directly to nuclear pore complexes (By similarity). Interacts with SMAD4 and NUP93; translocates SMAD4 to the nucleus through the NPC upon BMP7 stimulation resulting in activation of SMAD4 signaling (PubMed:26878725). Interacts with phosphorylated SMAD2; the interaction facilitates translocation of SMAD2 to the nucleus (By similarity). Interacts with SRP19 (PubMed:11682607). Interacts with RUNX2; the interaction inhibits RUNX2 nuclear translocation in osteoblasts (By similarity). Interacts with HDAC6, DLX3 and KLF4; the interaction facilitates HDAC6, DLX3 and KLF4 nuclear translocation in dental papilla cells (By similarity).</text>
</comment>
<comment type="subunit">
    <text evidence="8 9">(Microbial infection) Interacts with HIV-1 reverse transcription complex integrase and rev.</text>
</comment>
<comment type="interaction">
    <interactant intactId="EBI-286735">
        <id>O95373</id>
    </interactant>
    <interactant intactId="EBI-2293516">
        <id>P31260</id>
        <label>HOXA10</label>
    </interactant>
    <organismsDiffer>false</organismsDiffer>
    <experiments>4</experiments>
</comment>
<comment type="interaction">
    <interactant intactId="EBI-286735">
        <id>O95373</id>
    </interactant>
    <interactant intactId="EBI-21238334">
        <id>Q9BSK1</id>
        <label>ZNF577</label>
    </interactant>
    <organismsDiffer>false</organismsDiffer>
    <experiments>2</experiments>
</comment>
<comment type="interaction">
    <interactant intactId="EBI-286735">
        <id>O95373</id>
    </interactant>
    <interactant intactId="EBI-9676069">
        <id>Q7L2R6</id>
        <label>ZNF765</label>
    </interactant>
    <organismsDiffer>false</organismsDiffer>
    <experiments>2</experiments>
</comment>
<comment type="subcellular location">
    <subcellularLocation>
        <location evidence="1">Cytoplasm</location>
    </subcellularLocation>
    <subcellularLocation>
        <location evidence="1">Nucleus</location>
    </subcellularLocation>
    <text evidence="1">Localizes to the nucleus in the presence of BMP4.</text>
</comment>
<comment type="similarity">
    <text evidence="12">Belongs to the importin beta family.</text>
</comment>
<evidence type="ECO:0000250" key="1">
    <source>
        <dbReference type="UniProtKB" id="Q9EPL8"/>
    </source>
</evidence>
<evidence type="ECO:0000255" key="2">
    <source>
        <dbReference type="PROSITE-ProRule" id="PRU00115"/>
    </source>
</evidence>
<evidence type="ECO:0000256" key="3">
    <source>
        <dbReference type="SAM" id="MobiDB-lite"/>
    </source>
</evidence>
<evidence type="ECO:0000269" key="4">
    <source>
    </source>
</evidence>
<evidence type="ECO:0000269" key="5">
    <source>
    </source>
</evidence>
<evidence type="ECO:0000269" key="6">
    <source>
    </source>
</evidence>
<evidence type="ECO:0000269" key="7">
    <source>
    </source>
</evidence>
<evidence type="ECO:0000269" key="8">
    <source>
    </source>
</evidence>
<evidence type="ECO:0000269" key="9">
    <source>
    </source>
</evidence>
<evidence type="ECO:0000269" key="10">
    <source>
    </source>
</evidence>
<evidence type="ECO:0000269" key="11">
    <source>
    </source>
</evidence>
<evidence type="ECO:0000305" key="12"/>
<evidence type="ECO:0007744" key="13">
    <source>
    </source>
</evidence>
<evidence type="ECO:0007744" key="14">
    <source>
    </source>
</evidence>
<evidence type="ECO:0007744" key="15">
    <source>
    </source>
</evidence>
<evidence type="ECO:0007744" key="16">
    <source>
    </source>
</evidence>